<dbReference type="EMBL" id="D11382">
    <property type="protein sequence ID" value="BAA01978.1"/>
    <property type="molecule type" value="Genomic_DNA"/>
</dbReference>
<dbReference type="EMBL" id="Z11961">
    <property type="protein sequence ID" value="CAA78018.1"/>
    <property type="status" value="ALT_FRAME"/>
    <property type="molecule type" value="mRNA"/>
</dbReference>
<dbReference type="PIR" id="A37332">
    <property type="entry name" value="A37332"/>
</dbReference>
<dbReference type="PIR" id="S24390">
    <property type="entry name" value="S24390"/>
</dbReference>
<dbReference type="RefSeq" id="NP_990670.2">
    <property type="nucleotide sequence ID" value="NM_205339.3"/>
</dbReference>
<dbReference type="SMR" id="Q00709"/>
<dbReference type="FunCoup" id="Q00709">
    <property type="interactions" value="646"/>
</dbReference>
<dbReference type="STRING" id="9031.ENSGALP00000020984"/>
<dbReference type="PaxDb" id="9031-ENSGALP00000020984"/>
<dbReference type="Ensembl" id="ENSGALT00010028291.1">
    <property type="protein sequence ID" value="ENSGALP00010016205.1"/>
    <property type="gene ID" value="ENSGALG00010011843.1"/>
</dbReference>
<dbReference type="GeneID" id="396282"/>
<dbReference type="KEGG" id="gga:396282"/>
<dbReference type="CTD" id="596"/>
<dbReference type="VEuPathDB" id="HostDB:geneid_396282"/>
<dbReference type="eggNOG" id="KOG4728">
    <property type="taxonomic scope" value="Eukaryota"/>
</dbReference>
<dbReference type="GeneTree" id="ENSGT01130000278332"/>
<dbReference type="HOGENOM" id="CLU_085401_0_0_1"/>
<dbReference type="InParanoid" id="Q00709"/>
<dbReference type="OrthoDB" id="6021377at2759"/>
<dbReference type="PhylomeDB" id="Q00709"/>
<dbReference type="TreeFam" id="TF315834"/>
<dbReference type="Reactome" id="R-GGA-111453">
    <property type="pathway name" value="BH3-only proteins associate with and inactivate anti-apoptotic BCL-2 members"/>
</dbReference>
<dbReference type="Reactome" id="R-GGA-844455">
    <property type="pathway name" value="The NLRP1 inflammasome"/>
</dbReference>
<dbReference type="PRO" id="PR:Q00709"/>
<dbReference type="Proteomes" id="UP000000539">
    <property type="component" value="Chromosome 2"/>
</dbReference>
<dbReference type="Bgee" id="ENSGALG00000012885">
    <property type="expression patterns" value="Expressed in spleen and 12 other cell types or tissues"/>
</dbReference>
<dbReference type="GO" id="GO:0097138">
    <property type="term" value="C:BAD-BCL-2 complex"/>
    <property type="evidence" value="ECO:0007669"/>
    <property type="project" value="Ensembl"/>
</dbReference>
<dbReference type="GO" id="GO:0005829">
    <property type="term" value="C:cytosol"/>
    <property type="evidence" value="ECO:0007669"/>
    <property type="project" value="Ensembl"/>
</dbReference>
<dbReference type="GO" id="GO:0005789">
    <property type="term" value="C:endoplasmic reticulum membrane"/>
    <property type="evidence" value="ECO:0000250"/>
    <property type="project" value="UniProtKB"/>
</dbReference>
<dbReference type="GO" id="GO:0005741">
    <property type="term" value="C:mitochondrial outer membrane"/>
    <property type="evidence" value="ECO:0000250"/>
    <property type="project" value="UniProtKB"/>
</dbReference>
<dbReference type="GO" id="GO:0005739">
    <property type="term" value="C:mitochondrion"/>
    <property type="evidence" value="ECO:0000250"/>
    <property type="project" value="HGNC"/>
</dbReference>
<dbReference type="GO" id="GO:0043209">
    <property type="term" value="C:myelin sheath"/>
    <property type="evidence" value="ECO:0007669"/>
    <property type="project" value="Ensembl"/>
</dbReference>
<dbReference type="GO" id="GO:0031965">
    <property type="term" value="C:nuclear membrane"/>
    <property type="evidence" value="ECO:0007669"/>
    <property type="project" value="UniProtKB-SubCell"/>
</dbReference>
<dbReference type="GO" id="GO:0046930">
    <property type="term" value="C:pore complex"/>
    <property type="evidence" value="ECO:0007669"/>
    <property type="project" value="Ensembl"/>
</dbReference>
<dbReference type="GO" id="GO:0051434">
    <property type="term" value="F:BH3 domain binding"/>
    <property type="evidence" value="ECO:0007669"/>
    <property type="project" value="Ensembl"/>
</dbReference>
<dbReference type="GO" id="GO:0015267">
    <property type="term" value="F:channel activity"/>
    <property type="evidence" value="ECO:0000318"/>
    <property type="project" value="GO_Central"/>
</dbReference>
<dbReference type="GO" id="GO:0016248">
    <property type="term" value="F:channel inhibitor activity"/>
    <property type="evidence" value="ECO:0007669"/>
    <property type="project" value="Ensembl"/>
</dbReference>
<dbReference type="GO" id="GO:0140297">
    <property type="term" value="F:DNA-binding transcription factor binding"/>
    <property type="evidence" value="ECO:0007669"/>
    <property type="project" value="Ensembl"/>
</dbReference>
<dbReference type="GO" id="GO:0042802">
    <property type="term" value="F:identical protein binding"/>
    <property type="evidence" value="ECO:0007669"/>
    <property type="project" value="Ensembl"/>
</dbReference>
<dbReference type="GO" id="GO:0060090">
    <property type="term" value="F:molecular adaptor activity"/>
    <property type="evidence" value="ECO:0007669"/>
    <property type="project" value="Ensembl"/>
</dbReference>
<dbReference type="GO" id="GO:0002020">
    <property type="term" value="F:protease binding"/>
    <property type="evidence" value="ECO:0007669"/>
    <property type="project" value="Ensembl"/>
</dbReference>
<dbReference type="GO" id="GO:0046982">
    <property type="term" value="F:protein heterodimerization activity"/>
    <property type="evidence" value="ECO:0007669"/>
    <property type="project" value="Ensembl"/>
</dbReference>
<dbReference type="GO" id="GO:0051721">
    <property type="term" value="F:protein phosphatase 2A binding"/>
    <property type="evidence" value="ECO:0007669"/>
    <property type="project" value="Ensembl"/>
</dbReference>
<dbReference type="GO" id="GO:0043565">
    <property type="term" value="F:sequence-specific DNA binding"/>
    <property type="evidence" value="ECO:0007669"/>
    <property type="project" value="Ensembl"/>
</dbReference>
<dbReference type="GO" id="GO:0031625">
    <property type="term" value="F:ubiquitin protein ligase binding"/>
    <property type="evidence" value="ECO:0007669"/>
    <property type="project" value="Ensembl"/>
</dbReference>
<dbReference type="GO" id="GO:0007015">
    <property type="term" value="P:actin filament organization"/>
    <property type="evidence" value="ECO:0007669"/>
    <property type="project" value="Ensembl"/>
</dbReference>
<dbReference type="GO" id="GO:0031103">
    <property type="term" value="P:axon regeneration"/>
    <property type="evidence" value="ECO:0007669"/>
    <property type="project" value="Ensembl"/>
</dbReference>
<dbReference type="GO" id="GO:0007409">
    <property type="term" value="P:axonogenesis"/>
    <property type="evidence" value="ECO:0007669"/>
    <property type="project" value="Ensembl"/>
</dbReference>
<dbReference type="GO" id="GO:0001783">
    <property type="term" value="P:B cell apoptotic process"/>
    <property type="evidence" value="ECO:0007669"/>
    <property type="project" value="Ensembl"/>
</dbReference>
<dbReference type="GO" id="GO:0001782">
    <property type="term" value="P:B cell homeostasis"/>
    <property type="evidence" value="ECO:0007669"/>
    <property type="project" value="Ensembl"/>
</dbReference>
<dbReference type="GO" id="GO:0002326">
    <property type="term" value="P:B cell lineage commitment"/>
    <property type="evidence" value="ECO:0007669"/>
    <property type="project" value="Ensembl"/>
</dbReference>
<dbReference type="GO" id="GO:0042100">
    <property type="term" value="P:B cell proliferation"/>
    <property type="evidence" value="ECO:0007669"/>
    <property type="project" value="Ensembl"/>
</dbReference>
<dbReference type="GO" id="GO:0050853">
    <property type="term" value="P:B cell receptor signaling pathway"/>
    <property type="evidence" value="ECO:0007669"/>
    <property type="project" value="Ensembl"/>
</dbReference>
<dbReference type="GO" id="GO:0001662">
    <property type="term" value="P:behavioral fear response"/>
    <property type="evidence" value="ECO:0007669"/>
    <property type="project" value="Ensembl"/>
</dbReference>
<dbReference type="GO" id="GO:0001658">
    <property type="term" value="P:branching involved in ureteric bud morphogenesis"/>
    <property type="evidence" value="ECO:0007669"/>
    <property type="project" value="Ensembl"/>
</dbReference>
<dbReference type="GO" id="GO:0060402">
    <property type="term" value="P:calcium ion transport into cytosol"/>
    <property type="evidence" value="ECO:0007669"/>
    <property type="project" value="Ensembl"/>
</dbReference>
<dbReference type="GO" id="GO:0043375">
    <property type="term" value="P:CD8-positive, alpha-beta T cell lineage commitment"/>
    <property type="evidence" value="ECO:0007669"/>
    <property type="project" value="Ensembl"/>
</dbReference>
<dbReference type="GO" id="GO:0098609">
    <property type="term" value="P:cell-cell adhesion"/>
    <property type="evidence" value="ECO:0007669"/>
    <property type="project" value="Ensembl"/>
</dbReference>
<dbReference type="GO" id="GO:0042149">
    <property type="term" value="P:cellular response to glucose starvation"/>
    <property type="evidence" value="ECO:0007669"/>
    <property type="project" value="Ensembl"/>
</dbReference>
<dbReference type="GO" id="GO:0071456">
    <property type="term" value="P:cellular response to hypoxia"/>
    <property type="evidence" value="ECO:0007669"/>
    <property type="project" value="Ensembl"/>
</dbReference>
<dbReference type="GO" id="GO:0021747">
    <property type="term" value="P:cochlear nucleus development"/>
    <property type="evidence" value="ECO:0007669"/>
    <property type="project" value="Ensembl"/>
</dbReference>
<dbReference type="GO" id="GO:0051607">
    <property type="term" value="P:defense response to virus"/>
    <property type="evidence" value="ECO:0007669"/>
    <property type="project" value="Ensembl"/>
</dbReference>
<dbReference type="GO" id="GO:0097048">
    <property type="term" value="P:dendritic cell apoptotic process"/>
    <property type="evidence" value="ECO:0007669"/>
    <property type="project" value="Ensembl"/>
</dbReference>
<dbReference type="GO" id="GO:0048546">
    <property type="term" value="P:digestive tract morphogenesis"/>
    <property type="evidence" value="ECO:0007669"/>
    <property type="project" value="Ensembl"/>
</dbReference>
<dbReference type="GO" id="GO:0043583">
    <property type="term" value="P:ear development"/>
    <property type="evidence" value="ECO:0007669"/>
    <property type="project" value="Ensembl"/>
</dbReference>
<dbReference type="GO" id="GO:0032469">
    <property type="term" value="P:endoplasmic reticulum calcium ion homeostasis"/>
    <property type="evidence" value="ECO:0007669"/>
    <property type="project" value="Ensembl"/>
</dbReference>
<dbReference type="GO" id="GO:1904019">
    <property type="term" value="P:epithelial cell apoptotic process"/>
    <property type="evidence" value="ECO:0007669"/>
    <property type="project" value="Ensembl"/>
</dbReference>
<dbReference type="GO" id="GO:0051649">
    <property type="term" value="P:establishment of localization in cell"/>
    <property type="evidence" value="ECO:0007669"/>
    <property type="project" value="Ensembl"/>
</dbReference>
<dbReference type="GO" id="GO:0097192">
    <property type="term" value="P:extrinsic apoptotic signaling pathway in absence of ligand"/>
    <property type="evidence" value="ECO:0000318"/>
    <property type="project" value="GO_Central"/>
</dbReference>
<dbReference type="GO" id="GO:0008625">
    <property type="term" value="P:extrinsic apoptotic signaling pathway via death domain receptors"/>
    <property type="evidence" value="ECO:0007669"/>
    <property type="project" value="Ensembl"/>
</dbReference>
<dbReference type="GO" id="GO:0048041">
    <property type="term" value="P:focal adhesion assembly"/>
    <property type="evidence" value="ECO:0007669"/>
    <property type="project" value="Ensembl"/>
</dbReference>
<dbReference type="GO" id="GO:0000082">
    <property type="term" value="P:G1/S transition of mitotic cell cycle"/>
    <property type="evidence" value="ECO:0007669"/>
    <property type="project" value="Ensembl"/>
</dbReference>
<dbReference type="GO" id="GO:0022612">
    <property type="term" value="P:gland morphogenesis"/>
    <property type="evidence" value="ECO:0007669"/>
    <property type="project" value="Ensembl"/>
</dbReference>
<dbReference type="GO" id="GO:0032835">
    <property type="term" value="P:glomerulus development"/>
    <property type="evidence" value="ECO:0007669"/>
    <property type="project" value="Ensembl"/>
</dbReference>
<dbReference type="GO" id="GO:0060218">
    <property type="term" value="P:hematopoietic stem cell differentiation"/>
    <property type="evidence" value="ECO:0007669"/>
    <property type="project" value="Ensembl"/>
</dbReference>
<dbReference type="GO" id="GO:0048873">
    <property type="term" value="P:homeostasis of number of cells within a tissue"/>
    <property type="evidence" value="ECO:0007669"/>
    <property type="project" value="Ensembl"/>
</dbReference>
<dbReference type="GO" id="GO:0008630">
    <property type="term" value="P:intrinsic apoptotic signaling pathway in response to DNA damage"/>
    <property type="evidence" value="ECO:0000318"/>
    <property type="project" value="GO_Central"/>
</dbReference>
<dbReference type="GO" id="GO:0070059">
    <property type="term" value="P:intrinsic apoptotic signaling pathway in response to endoplasmic reticulum stress"/>
    <property type="evidence" value="ECO:0007669"/>
    <property type="project" value="Ensembl"/>
</dbReference>
<dbReference type="GO" id="GO:0008631">
    <property type="term" value="P:intrinsic apoptotic signaling pathway in response to oxidative stress"/>
    <property type="evidence" value="ECO:0007669"/>
    <property type="project" value="Ensembl"/>
</dbReference>
<dbReference type="GO" id="GO:0070306">
    <property type="term" value="P:lens fiber cell differentiation"/>
    <property type="evidence" value="ECO:0000304"/>
    <property type="project" value="AgBase"/>
</dbReference>
<dbReference type="GO" id="GO:0002320">
    <property type="term" value="P:lymphoid progenitor cell differentiation"/>
    <property type="evidence" value="ECO:0007669"/>
    <property type="project" value="Ensembl"/>
</dbReference>
<dbReference type="GO" id="GO:0008584">
    <property type="term" value="P:male gonad development"/>
    <property type="evidence" value="ECO:0007669"/>
    <property type="project" value="Ensembl"/>
</dbReference>
<dbReference type="GO" id="GO:0006582">
    <property type="term" value="P:melanin metabolic process"/>
    <property type="evidence" value="ECO:0007669"/>
    <property type="project" value="Ensembl"/>
</dbReference>
<dbReference type="GO" id="GO:0030318">
    <property type="term" value="P:melanocyte differentiation"/>
    <property type="evidence" value="ECO:0007669"/>
    <property type="project" value="Ensembl"/>
</dbReference>
<dbReference type="GO" id="GO:0014031">
    <property type="term" value="P:mesenchymal cell development"/>
    <property type="evidence" value="ECO:0007669"/>
    <property type="project" value="Ensembl"/>
</dbReference>
<dbReference type="GO" id="GO:0001656">
    <property type="term" value="P:metanephros development"/>
    <property type="evidence" value="ECO:0007669"/>
    <property type="project" value="Ensembl"/>
</dbReference>
<dbReference type="GO" id="GO:0097049">
    <property type="term" value="P:motor neuron apoptotic process"/>
    <property type="evidence" value="ECO:0007669"/>
    <property type="project" value="Ensembl"/>
</dbReference>
<dbReference type="GO" id="GO:0033028">
    <property type="term" value="P:myeloid cell apoptotic process"/>
    <property type="evidence" value="ECO:0007669"/>
    <property type="project" value="Ensembl"/>
</dbReference>
<dbReference type="GO" id="GO:2000811">
    <property type="term" value="P:negative regulation of anoikis"/>
    <property type="evidence" value="ECO:0007669"/>
    <property type="project" value="Ensembl"/>
</dbReference>
<dbReference type="GO" id="GO:0043066">
    <property type="term" value="P:negative regulation of apoptotic process"/>
    <property type="evidence" value="ECO:0000250"/>
    <property type="project" value="HGNC"/>
</dbReference>
<dbReference type="GO" id="GO:0010507">
    <property type="term" value="P:negative regulation of autophagy"/>
    <property type="evidence" value="ECO:0000250"/>
    <property type="project" value="UniProtKB"/>
</dbReference>
<dbReference type="GO" id="GO:0002903">
    <property type="term" value="P:negative regulation of B cell apoptotic process"/>
    <property type="evidence" value="ECO:0007669"/>
    <property type="project" value="Ensembl"/>
</dbReference>
<dbReference type="GO" id="GO:0010523">
    <property type="term" value="P:negative regulation of calcium ion transport into cytosol"/>
    <property type="evidence" value="ECO:0007669"/>
    <property type="project" value="Ensembl"/>
</dbReference>
<dbReference type="GO" id="GO:0030308">
    <property type="term" value="P:negative regulation of cell growth"/>
    <property type="evidence" value="ECO:0007669"/>
    <property type="project" value="Ensembl"/>
</dbReference>
<dbReference type="GO" id="GO:0030336">
    <property type="term" value="P:negative regulation of cell migration"/>
    <property type="evidence" value="ECO:0007669"/>
    <property type="project" value="Ensembl"/>
</dbReference>
<dbReference type="GO" id="GO:0032848">
    <property type="term" value="P:negative regulation of cellular pH reduction"/>
    <property type="evidence" value="ECO:0000250"/>
    <property type="project" value="HGNC"/>
</dbReference>
<dbReference type="GO" id="GO:2000669">
    <property type="term" value="P:negative regulation of dendritic cell apoptotic process"/>
    <property type="evidence" value="ECO:0007669"/>
    <property type="project" value="Ensembl"/>
</dbReference>
<dbReference type="GO" id="GO:1904036">
    <property type="term" value="P:negative regulation of epithelial cell apoptotic process"/>
    <property type="evidence" value="ECO:0007669"/>
    <property type="project" value="Ensembl"/>
</dbReference>
<dbReference type="GO" id="GO:2001240">
    <property type="term" value="P:negative regulation of extrinsic apoptotic signaling pathway in absence of ligand"/>
    <property type="evidence" value="ECO:0007669"/>
    <property type="project" value="Ensembl"/>
</dbReference>
<dbReference type="GO" id="GO:2000134">
    <property type="term" value="P:negative regulation of G1/S transition of mitotic cell cycle"/>
    <property type="evidence" value="ECO:0007669"/>
    <property type="project" value="Ensembl"/>
</dbReference>
<dbReference type="GO" id="GO:2001243">
    <property type="term" value="P:negative regulation of intrinsic apoptotic signaling pathway"/>
    <property type="evidence" value="ECO:0007669"/>
    <property type="project" value="Ensembl"/>
</dbReference>
<dbReference type="GO" id="GO:2000672">
    <property type="term" value="P:negative regulation of motor neuron apoptotic process"/>
    <property type="evidence" value="ECO:0007669"/>
    <property type="project" value="Ensembl"/>
</dbReference>
<dbReference type="GO" id="GO:0033033">
    <property type="term" value="P:negative regulation of myeloid cell apoptotic process"/>
    <property type="evidence" value="ECO:0007669"/>
    <property type="project" value="Ensembl"/>
</dbReference>
<dbReference type="GO" id="GO:0030279">
    <property type="term" value="P:negative regulation of ossification"/>
    <property type="evidence" value="ECO:0007669"/>
    <property type="project" value="Ensembl"/>
</dbReference>
<dbReference type="GO" id="GO:0033689">
    <property type="term" value="P:negative regulation of osteoblast proliferation"/>
    <property type="evidence" value="ECO:0007669"/>
    <property type="project" value="Ensembl"/>
</dbReference>
<dbReference type="GO" id="GO:0046671">
    <property type="term" value="P:negative regulation of retinal cell programmed cell death"/>
    <property type="evidence" value="ECO:0007669"/>
    <property type="project" value="Ensembl"/>
</dbReference>
<dbReference type="GO" id="GO:0070233">
    <property type="term" value="P:negative regulation of T cell apoptotic process"/>
    <property type="evidence" value="ECO:0007669"/>
    <property type="project" value="Ensembl"/>
</dbReference>
<dbReference type="GO" id="GO:0042551">
    <property type="term" value="P:neuron maturation"/>
    <property type="evidence" value="ECO:0007669"/>
    <property type="project" value="Ensembl"/>
</dbReference>
<dbReference type="GO" id="GO:0048599">
    <property type="term" value="P:oocyte development"/>
    <property type="evidence" value="ECO:0007669"/>
    <property type="project" value="Ensembl"/>
</dbReference>
<dbReference type="GO" id="GO:0035265">
    <property type="term" value="P:organ growth"/>
    <property type="evidence" value="ECO:0007669"/>
    <property type="project" value="Ensembl"/>
</dbReference>
<dbReference type="GO" id="GO:0001503">
    <property type="term" value="P:ossification"/>
    <property type="evidence" value="ECO:0007669"/>
    <property type="project" value="Ensembl"/>
</dbReference>
<dbReference type="GO" id="GO:0033687">
    <property type="term" value="P:osteoblast proliferation"/>
    <property type="evidence" value="ECO:0007669"/>
    <property type="project" value="Ensembl"/>
</dbReference>
<dbReference type="GO" id="GO:0001541">
    <property type="term" value="P:ovarian follicle development"/>
    <property type="evidence" value="ECO:0007669"/>
    <property type="project" value="Ensembl"/>
</dbReference>
<dbReference type="GO" id="GO:0048753">
    <property type="term" value="P:pigment granule organization"/>
    <property type="evidence" value="ECO:0007669"/>
    <property type="project" value="Ensembl"/>
</dbReference>
<dbReference type="GO" id="GO:0043065">
    <property type="term" value="P:positive regulation of apoptotic process"/>
    <property type="evidence" value="ECO:0000318"/>
    <property type="project" value="GO_Central"/>
</dbReference>
<dbReference type="GO" id="GO:0030890">
    <property type="term" value="P:positive regulation of B cell proliferation"/>
    <property type="evidence" value="ECO:0007669"/>
    <property type="project" value="Ensembl"/>
</dbReference>
<dbReference type="GO" id="GO:0030307">
    <property type="term" value="P:positive regulation of cell growth"/>
    <property type="evidence" value="ECO:0007669"/>
    <property type="project" value="Ensembl"/>
</dbReference>
<dbReference type="GO" id="GO:0045636">
    <property type="term" value="P:positive regulation of melanocyte differentiation"/>
    <property type="evidence" value="ECO:0007669"/>
    <property type="project" value="Ensembl"/>
</dbReference>
<dbReference type="GO" id="GO:0040018">
    <property type="term" value="P:positive regulation of multicellular organism growth"/>
    <property type="evidence" value="ECO:0007669"/>
    <property type="project" value="Ensembl"/>
</dbReference>
<dbReference type="GO" id="GO:0014042">
    <property type="term" value="P:positive regulation of neuron maturation"/>
    <property type="evidence" value="ECO:0007669"/>
    <property type="project" value="Ensembl"/>
</dbReference>
<dbReference type="GO" id="GO:0048743">
    <property type="term" value="P:positive regulation of skeletal muscle fiber development"/>
    <property type="evidence" value="ECO:0007669"/>
    <property type="project" value="Ensembl"/>
</dbReference>
<dbReference type="GO" id="GO:0014911">
    <property type="term" value="P:positive regulation of smooth muscle cell migration"/>
    <property type="evidence" value="ECO:0007669"/>
    <property type="project" value="Ensembl"/>
</dbReference>
<dbReference type="GO" id="GO:0009791">
    <property type="term" value="P:post-embryonic development"/>
    <property type="evidence" value="ECO:0007669"/>
    <property type="project" value="Ensembl"/>
</dbReference>
<dbReference type="GO" id="GO:0000209">
    <property type="term" value="P:protein polyubiquitination"/>
    <property type="evidence" value="ECO:0007669"/>
    <property type="project" value="Ensembl"/>
</dbReference>
<dbReference type="GO" id="GO:0072593">
    <property type="term" value="P:reactive oxygen species metabolic process"/>
    <property type="evidence" value="ECO:0007669"/>
    <property type="project" value="Ensembl"/>
</dbReference>
<dbReference type="GO" id="GO:0001952">
    <property type="term" value="P:regulation of cell-matrix adhesion"/>
    <property type="evidence" value="ECO:0007669"/>
    <property type="project" value="Ensembl"/>
</dbReference>
<dbReference type="GO" id="GO:0010468">
    <property type="term" value="P:regulation of gene expression"/>
    <property type="evidence" value="ECO:0007669"/>
    <property type="project" value="Ensembl"/>
</dbReference>
<dbReference type="GO" id="GO:0010559">
    <property type="term" value="P:regulation of glycoprotein biosynthetic process"/>
    <property type="evidence" value="ECO:0007669"/>
    <property type="project" value="Ensembl"/>
</dbReference>
<dbReference type="GO" id="GO:0046902">
    <property type="term" value="P:regulation of mitochondrial membrane permeability"/>
    <property type="evidence" value="ECO:0000250"/>
    <property type="project" value="HGNC-UCL"/>
</dbReference>
<dbReference type="GO" id="GO:0051881">
    <property type="term" value="P:regulation of mitochondrial membrane potential"/>
    <property type="evidence" value="ECO:0000250"/>
    <property type="project" value="HGNC-UCL"/>
</dbReference>
<dbReference type="GO" id="GO:0006808">
    <property type="term" value="P:regulation of nitrogen utilization"/>
    <property type="evidence" value="ECO:0007669"/>
    <property type="project" value="Ensembl"/>
</dbReference>
<dbReference type="GO" id="GO:0032880">
    <property type="term" value="P:regulation of protein localization"/>
    <property type="evidence" value="ECO:0007669"/>
    <property type="project" value="Ensembl"/>
</dbReference>
<dbReference type="GO" id="GO:0031647">
    <property type="term" value="P:regulation of protein stability"/>
    <property type="evidence" value="ECO:0007669"/>
    <property type="project" value="Ensembl"/>
</dbReference>
<dbReference type="GO" id="GO:0045069">
    <property type="term" value="P:regulation of viral genome replication"/>
    <property type="evidence" value="ECO:0007669"/>
    <property type="project" value="Ensembl"/>
</dbReference>
<dbReference type="GO" id="GO:0001836">
    <property type="term" value="P:release of cytochrome c from mitochondria"/>
    <property type="evidence" value="ECO:0000250"/>
    <property type="project" value="HGNC-UCL"/>
</dbReference>
<dbReference type="GO" id="GO:0003014">
    <property type="term" value="P:renal system process"/>
    <property type="evidence" value="ECO:0007669"/>
    <property type="project" value="Ensembl"/>
</dbReference>
<dbReference type="GO" id="GO:0034097">
    <property type="term" value="P:response to cytokine"/>
    <property type="evidence" value="ECO:0007669"/>
    <property type="project" value="Ensembl"/>
</dbReference>
<dbReference type="GO" id="GO:0010332">
    <property type="term" value="P:response to gamma radiation"/>
    <property type="evidence" value="ECO:0007669"/>
    <property type="project" value="Ensembl"/>
</dbReference>
<dbReference type="GO" id="GO:0051384">
    <property type="term" value="P:response to glucocorticoid"/>
    <property type="evidence" value="ECO:0007669"/>
    <property type="project" value="Ensembl"/>
</dbReference>
<dbReference type="GO" id="GO:0042542">
    <property type="term" value="P:response to hydrogen peroxide"/>
    <property type="evidence" value="ECO:0007669"/>
    <property type="project" value="Ensembl"/>
</dbReference>
<dbReference type="GO" id="GO:0010039">
    <property type="term" value="P:response to iron ion"/>
    <property type="evidence" value="ECO:0007669"/>
    <property type="project" value="Ensembl"/>
</dbReference>
<dbReference type="GO" id="GO:0002931">
    <property type="term" value="P:response to ischemia"/>
    <property type="evidence" value="ECO:0007669"/>
    <property type="project" value="Ensembl"/>
</dbReference>
<dbReference type="GO" id="GO:0035094">
    <property type="term" value="P:response to nicotine"/>
    <property type="evidence" value="ECO:0007669"/>
    <property type="project" value="Ensembl"/>
</dbReference>
<dbReference type="GO" id="GO:0009636">
    <property type="term" value="P:response to toxic substance"/>
    <property type="evidence" value="ECO:0007669"/>
    <property type="project" value="Ensembl"/>
</dbReference>
<dbReference type="GO" id="GO:0010224">
    <property type="term" value="P:response to UV-B"/>
    <property type="evidence" value="ECO:0007669"/>
    <property type="project" value="Ensembl"/>
</dbReference>
<dbReference type="GO" id="GO:0009410">
    <property type="term" value="P:response to xenobiotic stimulus"/>
    <property type="evidence" value="ECO:0007669"/>
    <property type="project" value="Ensembl"/>
</dbReference>
<dbReference type="GO" id="GO:0046666">
    <property type="term" value="P:retinal cell programmed cell death"/>
    <property type="evidence" value="ECO:0007669"/>
    <property type="project" value="Ensembl"/>
</dbReference>
<dbReference type="GO" id="GO:0048741">
    <property type="term" value="P:skeletal muscle fiber development"/>
    <property type="evidence" value="ECO:0007669"/>
    <property type="project" value="Ensembl"/>
</dbReference>
<dbReference type="GO" id="GO:0014909">
    <property type="term" value="P:smooth muscle cell migration"/>
    <property type="evidence" value="ECO:0007669"/>
    <property type="project" value="Ensembl"/>
</dbReference>
<dbReference type="GO" id="GO:0048536">
    <property type="term" value="P:spleen development"/>
    <property type="evidence" value="ECO:0007669"/>
    <property type="project" value="Ensembl"/>
</dbReference>
<dbReference type="GO" id="GO:0048864">
    <property type="term" value="P:stem cell development"/>
    <property type="evidence" value="ECO:0007669"/>
    <property type="project" value="Ensembl"/>
</dbReference>
<dbReference type="GO" id="GO:0070231">
    <property type="term" value="P:T cell apoptotic process"/>
    <property type="evidence" value="ECO:0007669"/>
    <property type="project" value="Ensembl"/>
</dbReference>
<dbReference type="GO" id="GO:0033077">
    <property type="term" value="P:T cell differentiation in thymus"/>
    <property type="evidence" value="ECO:0007669"/>
    <property type="project" value="Ensembl"/>
</dbReference>
<dbReference type="GO" id="GO:0043029">
    <property type="term" value="P:T cell homeostasis"/>
    <property type="evidence" value="ECO:0007669"/>
    <property type="project" value="Ensembl"/>
</dbReference>
<dbReference type="GO" id="GO:0048538">
    <property type="term" value="P:thymus development"/>
    <property type="evidence" value="ECO:0007669"/>
    <property type="project" value="Ensembl"/>
</dbReference>
<dbReference type="CDD" id="cd06845">
    <property type="entry name" value="Bcl-2_like"/>
    <property type="match status" value="1"/>
</dbReference>
<dbReference type="FunFam" id="1.10.437.10:FF:000006">
    <property type="entry name" value="Apoptosis regulator Bcl-2"/>
    <property type="match status" value="1"/>
</dbReference>
<dbReference type="Gene3D" id="1.10.437.10">
    <property type="entry name" value="Blc2-like"/>
    <property type="match status" value="1"/>
</dbReference>
<dbReference type="InterPro" id="IPR013278">
    <property type="entry name" value="Apop_reg_Bcl2"/>
</dbReference>
<dbReference type="InterPro" id="IPR036834">
    <property type="entry name" value="Bcl-2-like_sf"/>
</dbReference>
<dbReference type="InterPro" id="IPR046371">
    <property type="entry name" value="Bcl-2_BH1-3"/>
</dbReference>
<dbReference type="InterPro" id="IPR026298">
    <property type="entry name" value="Bcl-2_fam"/>
</dbReference>
<dbReference type="InterPro" id="IPR002475">
    <property type="entry name" value="Bcl2-like"/>
</dbReference>
<dbReference type="InterPro" id="IPR004725">
    <property type="entry name" value="Bcl2/BclX"/>
</dbReference>
<dbReference type="InterPro" id="IPR020717">
    <property type="entry name" value="Bcl2_BH1_motif_CS"/>
</dbReference>
<dbReference type="InterPro" id="IPR020726">
    <property type="entry name" value="Bcl2_BH2_motif_CS"/>
</dbReference>
<dbReference type="InterPro" id="IPR020728">
    <property type="entry name" value="Bcl2_BH3_motif_CS"/>
</dbReference>
<dbReference type="InterPro" id="IPR003093">
    <property type="entry name" value="Bcl2_BH4"/>
</dbReference>
<dbReference type="InterPro" id="IPR020731">
    <property type="entry name" value="Bcl2_BH4_motif_CS"/>
</dbReference>
<dbReference type="NCBIfam" id="TIGR00865">
    <property type="entry name" value="bcl-2"/>
    <property type="match status" value="1"/>
</dbReference>
<dbReference type="PANTHER" id="PTHR11256:SF11">
    <property type="entry name" value="APOPTOSIS REGULATOR BCL-2"/>
    <property type="match status" value="1"/>
</dbReference>
<dbReference type="PANTHER" id="PTHR11256">
    <property type="entry name" value="BCL-2 RELATED"/>
    <property type="match status" value="1"/>
</dbReference>
<dbReference type="Pfam" id="PF00452">
    <property type="entry name" value="Bcl-2"/>
    <property type="match status" value="1"/>
</dbReference>
<dbReference type="Pfam" id="PF02180">
    <property type="entry name" value="BH4"/>
    <property type="match status" value="1"/>
</dbReference>
<dbReference type="PRINTS" id="PR01863">
    <property type="entry name" value="APOPREGBCL2"/>
</dbReference>
<dbReference type="PRINTS" id="PR01862">
    <property type="entry name" value="BCL2FAMILY"/>
</dbReference>
<dbReference type="SMART" id="SM00337">
    <property type="entry name" value="BCL"/>
    <property type="match status" value="1"/>
</dbReference>
<dbReference type="SMART" id="SM00265">
    <property type="entry name" value="BH4"/>
    <property type="match status" value="1"/>
</dbReference>
<dbReference type="SUPFAM" id="SSF56854">
    <property type="entry name" value="Bcl-2 inhibitors of programmed cell death"/>
    <property type="match status" value="1"/>
</dbReference>
<dbReference type="PROSITE" id="PS50062">
    <property type="entry name" value="BCL2_FAMILY"/>
    <property type="match status" value="1"/>
</dbReference>
<dbReference type="PROSITE" id="PS01080">
    <property type="entry name" value="BH1"/>
    <property type="match status" value="1"/>
</dbReference>
<dbReference type="PROSITE" id="PS01258">
    <property type="entry name" value="BH2"/>
    <property type="match status" value="1"/>
</dbReference>
<dbReference type="PROSITE" id="PS01259">
    <property type="entry name" value="BH3"/>
    <property type="match status" value="1"/>
</dbReference>
<dbReference type="PROSITE" id="PS01260">
    <property type="entry name" value="BH4_1"/>
    <property type="match status" value="1"/>
</dbReference>
<dbReference type="PROSITE" id="PS50063">
    <property type="entry name" value="BH4_2"/>
    <property type="match status" value="1"/>
</dbReference>
<sequence>MAHPGRRGYDNREIVLKYIHYKLSQRGYDWAAGEDRPPVPPAPAPAAAPAAVAAAGASSHHRPEPPGSAAASEVPPAEGLRPAPPGVHLALRQAGDEFSRRYQRDFAQMSGQLHLTPFTAHGRFVAVVEELFRDGVNWGRIVAFFEFGGVMCVESVNREMSPLVDNIATWMTEYLNRHLHNWIQDNGGWDAFVELYGNSMRPLFDFSWISLKTILSLVLVGACITLGAYLGHK</sequence>
<comment type="function">
    <text>Suppresses apoptosis in a variety of cell systems including factor-dependent lymphohematopoietic and neural cells. Regulates cell death by controlling the mitochondrial membrane permeability. Appears to function in a feedback loop system with caspases. Inhibits caspase activity either by preventing the release of cytochrome c from the mitochondria and/or by binding to the apoptosis-activating factor (APAF-1).</text>
</comment>
<comment type="subunit">
    <text evidence="1">Forms homodimers, and heterodimers with BAX, BAD, BAK and Bcl-X(L). Heterodimerization with BAX requires intact BH1 and BH2 motifs, and is necessary for anti-apoptotic activity (By similarity). Also interacts with APAF1 and RAF-1 (By similarity).</text>
</comment>
<comment type="subcellular location">
    <subcellularLocation>
        <location evidence="2">Mitochondrion outer membrane</location>
        <topology evidence="4">Single-pass membrane protein</topology>
    </subcellularLocation>
    <subcellularLocation>
        <location evidence="2">Nucleus membrane</location>
        <topology evidence="4">Single-pass membrane protein</topology>
    </subcellularLocation>
    <subcellularLocation>
        <location evidence="2">Endoplasmic reticulum membrane</location>
        <topology evidence="4">Single-pass membrane protein</topology>
    </subcellularLocation>
    <subcellularLocation>
        <location evidence="3">Cytoplasm</location>
    </subcellularLocation>
</comment>
<comment type="tissue specificity">
    <text>In adult chicken expressed, in thymus, spleen, kidney, heart, ovary and brain, with the highest levels in the thymus. In the embryo, highly levels expressed in all tissues with high levels in the bursa of Fabricius.</text>
</comment>
<comment type="domain">
    <text evidence="1">The BH4 motif is required for anti-apoptotic activity and for interaction with RAF-1.</text>
</comment>
<comment type="similarity">
    <text evidence="6">Belongs to the Bcl-2 family.</text>
</comment>
<comment type="sequence caution" evidence="6">
    <conflict type="frameshift">
        <sequence resource="EMBL-CDS" id="CAA78018"/>
    </conflict>
</comment>
<reference key="1">
    <citation type="journal article" date="1992" name="Nucleic Acids Res.">
        <title>Isolation and characterization of the chicken bcl-2 gene: expression in a variety of tissues including lymphoid and neuronal organs in adult and embryo.</title>
        <authorList>
            <person name="Eguchi Y."/>
            <person name="Ewert D.L."/>
            <person name="Tsujimoto Y."/>
        </authorList>
    </citation>
    <scope>NUCLEOTIDE SEQUENCE [GENOMIC DNA]</scope>
</reference>
<reference key="2">
    <citation type="journal article" date="1992" name="Biochim. Biophys. Acta">
        <title>Molecular cloning and DNA sequence analysis of cDNA encoding chicken homologue of the Bcl-2 oncoprotein.</title>
        <authorList>
            <person name="Cazals-Hatem D.L."/>
            <person name="Louie D.C."/>
            <person name="Tanaka S."/>
            <person name="Reed J.C."/>
        </authorList>
    </citation>
    <scope>NUCLEOTIDE SEQUENCE [MRNA]</scope>
    <source>
        <tissue>B-cell lymphoma</tissue>
    </source>
</reference>
<organism>
    <name type="scientific">Gallus gallus</name>
    <name type="common">Chicken</name>
    <dbReference type="NCBI Taxonomy" id="9031"/>
    <lineage>
        <taxon>Eukaryota</taxon>
        <taxon>Metazoa</taxon>
        <taxon>Chordata</taxon>
        <taxon>Craniata</taxon>
        <taxon>Vertebrata</taxon>
        <taxon>Euteleostomi</taxon>
        <taxon>Archelosauria</taxon>
        <taxon>Archosauria</taxon>
        <taxon>Dinosauria</taxon>
        <taxon>Saurischia</taxon>
        <taxon>Theropoda</taxon>
        <taxon>Coelurosauria</taxon>
        <taxon>Aves</taxon>
        <taxon>Neognathae</taxon>
        <taxon>Galloanserae</taxon>
        <taxon>Galliformes</taxon>
        <taxon>Phasianidae</taxon>
        <taxon>Phasianinae</taxon>
        <taxon>Gallus</taxon>
    </lineage>
</organism>
<evidence type="ECO:0000250" key="1"/>
<evidence type="ECO:0000250" key="2">
    <source>
        <dbReference type="UniProtKB" id="P10415"/>
    </source>
</evidence>
<evidence type="ECO:0000250" key="3">
    <source>
        <dbReference type="UniProtKB" id="P10417"/>
    </source>
</evidence>
<evidence type="ECO:0000255" key="4"/>
<evidence type="ECO:0000256" key="5">
    <source>
        <dbReference type="SAM" id="MobiDB-lite"/>
    </source>
</evidence>
<evidence type="ECO:0000305" key="6"/>
<gene>
    <name type="primary">BCL2</name>
    <name type="synonym">BCL-2</name>
</gene>
<proteinExistence type="evidence at transcript level"/>
<keyword id="KW-0053">Apoptosis</keyword>
<keyword id="KW-0963">Cytoplasm</keyword>
<keyword id="KW-0256">Endoplasmic reticulum</keyword>
<keyword id="KW-0472">Membrane</keyword>
<keyword id="KW-0496">Mitochondrion</keyword>
<keyword id="KW-1000">Mitochondrion outer membrane</keyword>
<keyword id="KW-0539">Nucleus</keyword>
<keyword id="KW-1185">Reference proteome</keyword>
<keyword id="KW-0812">Transmembrane</keyword>
<keyword id="KW-1133">Transmembrane helix</keyword>
<accession>Q00709</accession>
<protein>
    <recommendedName>
        <fullName>Apoptosis regulator Bcl-2</fullName>
    </recommendedName>
</protein>
<name>BCL2_CHICK</name>
<feature type="chain" id="PRO_0000143051" description="Apoptosis regulator Bcl-2">
    <location>
        <begin position="1"/>
        <end position="233"/>
    </location>
</feature>
<feature type="transmembrane region" description="Helical" evidence="4">
    <location>
        <begin position="208"/>
        <end position="228"/>
    </location>
</feature>
<feature type="region of interest" description="Disordered" evidence="5">
    <location>
        <begin position="32"/>
        <end position="86"/>
    </location>
</feature>
<feature type="short sequence motif" description="BH4">
    <location>
        <begin position="10"/>
        <end position="30"/>
    </location>
</feature>
<feature type="short sequence motif" description="BH3">
    <location>
        <begin position="87"/>
        <end position="101"/>
    </location>
</feature>
<feature type="short sequence motif" description="BH1">
    <location>
        <begin position="130"/>
        <end position="149"/>
    </location>
</feature>
<feature type="short sequence motif" description="BH2">
    <location>
        <begin position="181"/>
        <end position="196"/>
    </location>
</feature>
<feature type="sequence conflict" description="In Ref. 2; CAA78018." evidence="6" ref="2">
    <original>H</original>
    <variation>T</variation>
    <location>
        <position position="121"/>
    </location>
</feature>
<feature type="sequence conflict" description="In Ref. 2; CAA78018." evidence="6" ref="2">
    <original>G</original>
    <variation>V</variation>
    <location>
        <position position="139"/>
    </location>
</feature>